<accession>Q5RDW1</accession>
<comment type="function">
    <text evidence="1">Plays a role in the regulation of the mitochondrial ribosome assembly and of translational activity. Displays GTPase activity. Involved in the ribosome maturation process (By similarity).</text>
</comment>
<comment type="cofactor">
    <cofactor evidence="1">
        <name>Mg(2+)</name>
        <dbReference type="ChEBI" id="CHEBI:18420"/>
    </cofactor>
</comment>
<comment type="subunit">
    <text evidence="1">Associates with the mitochondrial ribosome large subunit; the association occurs in a GTP-dependent manner.</text>
</comment>
<comment type="subcellular location">
    <subcellularLocation>
        <location evidence="1">Mitochondrion</location>
    </subcellularLocation>
    <subcellularLocation>
        <location evidence="1">Mitochondrion inner membrane</location>
        <topology evidence="1">Peripheral membrane protein</topology>
        <orientation evidence="1">Matrix side</orientation>
    </subcellularLocation>
</comment>
<comment type="similarity">
    <text evidence="3">Belongs to the TRAFAC class OBG-HflX-like GTPase superfamily. OBG GTPase family.</text>
</comment>
<reference key="1">
    <citation type="submission" date="2004-11" db="EMBL/GenBank/DDBJ databases">
        <authorList>
            <consortium name="The German cDNA consortium"/>
        </authorList>
    </citation>
    <scope>NUCLEOTIDE SEQUENCE [LARGE SCALE MRNA]</scope>
    <source>
        <tissue>Kidney</tissue>
    </source>
</reference>
<feature type="chain" id="PRO_0000261589" description="Mitochondrial ribosome-associated GTPase 2">
    <location>
        <begin position="1"/>
        <end position="406"/>
    </location>
</feature>
<feature type="domain" description="Obg" evidence="2">
    <location>
        <begin position="70"/>
        <end position="224"/>
    </location>
</feature>
<feature type="domain" description="OBG-type G">
    <location>
        <begin position="225"/>
        <end position="390"/>
    </location>
</feature>
<feature type="region of interest" description="Localized in the mitochondria" evidence="1">
    <location>
        <begin position="15"/>
        <end position="406"/>
    </location>
</feature>
<feature type="region of interest" description="Not localized in the mitochondria" evidence="1">
    <location>
        <begin position="30"/>
        <end position="406"/>
    </location>
</feature>
<feature type="binding site" evidence="1">
    <location>
        <begin position="231"/>
        <end position="238"/>
    </location>
    <ligand>
        <name>GTP</name>
        <dbReference type="ChEBI" id="CHEBI:37565"/>
    </ligand>
</feature>
<feature type="binding site" evidence="1">
    <location>
        <position position="238"/>
    </location>
    <ligand>
        <name>Mg(2+)</name>
        <dbReference type="ChEBI" id="CHEBI:18420"/>
    </ligand>
</feature>
<feature type="binding site" evidence="1">
    <location>
        <begin position="256"/>
        <end position="260"/>
    </location>
    <ligand>
        <name>GTP</name>
        <dbReference type="ChEBI" id="CHEBI:37565"/>
    </ligand>
</feature>
<feature type="binding site" evidence="1">
    <location>
        <position position="258"/>
    </location>
    <ligand>
        <name>Mg(2+)</name>
        <dbReference type="ChEBI" id="CHEBI:18420"/>
    </ligand>
</feature>
<feature type="binding site" evidence="1">
    <location>
        <begin position="278"/>
        <end position="281"/>
    </location>
    <ligand>
        <name>GTP</name>
        <dbReference type="ChEBI" id="CHEBI:37565"/>
    </ligand>
</feature>
<feature type="binding site" evidence="1">
    <location>
        <begin position="345"/>
        <end position="348"/>
    </location>
    <ligand>
        <name>GTP</name>
        <dbReference type="ChEBI" id="CHEBI:37565"/>
    </ligand>
</feature>
<feature type="binding site" evidence="1">
    <location>
        <begin position="371"/>
        <end position="373"/>
    </location>
    <ligand>
        <name>GTP</name>
        <dbReference type="ChEBI" id="CHEBI:37565"/>
    </ligand>
</feature>
<proteinExistence type="evidence at transcript level"/>
<protein>
    <recommendedName>
        <fullName>Mitochondrial ribosome-associated GTPase 2</fullName>
    </recommendedName>
    <alternativeName>
        <fullName>GTP-binding protein 5</fullName>
    </alternativeName>
</protein>
<sequence length="406" mass="44073">MTPARHFSARLRTVFEGVGHWALSTQAGLKPSRLLPQQASPRLLSVSCADLAKRQELPGKKPLSEKKLKRYFVDYRRVLVCGGNGGAGASCFHSEPRKEFGGPDGGDGGNGGHVILRADQQVKSLSSVLSRYQGFSGEDGGSKNCFGRSGAVLYIRVPMGTLVKEGGRVVADLSRVGDEYIAALGGAGGKGNRFFLANNNRAPVTCTPGQPGQQRVLHLELKTVAHAGMVGFPNAGKSSLLRAISNARPAVASYPFTTLKPHVGIVHYEGHLQIAVADIPGIIRGAHQNRGLGSAFLRHIERCRFLLFVVDLSQPEPWTQVDDLKYELEMYEKGLSERPHAIIANKIDLPEAQANLSQLRDHLGQEVIVLSALTGENLEQLLLHLKVLYDAYTEAELGQGRQPLRW</sequence>
<keyword id="KW-0342">GTP-binding</keyword>
<keyword id="KW-0460">Magnesium</keyword>
<keyword id="KW-0472">Membrane</keyword>
<keyword id="KW-0479">Metal-binding</keyword>
<keyword id="KW-0496">Mitochondrion</keyword>
<keyword id="KW-0999">Mitochondrion inner membrane</keyword>
<keyword id="KW-0547">Nucleotide-binding</keyword>
<keyword id="KW-1185">Reference proteome</keyword>
<keyword id="KW-0690">Ribosome biogenesis</keyword>
<keyword id="KW-0810">Translation regulation</keyword>
<gene>
    <name type="primary">MTG2</name>
    <name type="synonym">GTPBP5</name>
</gene>
<dbReference type="EMBL" id="CR857782">
    <property type="protein sequence ID" value="CAH90046.1"/>
    <property type="molecule type" value="mRNA"/>
</dbReference>
<dbReference type="RefSeq" id="NP_001124977.1">
    <property type="nucleotide sequence ID" value="NM_001131505.1"/>
</dbReference>
<dbReference type="SMR" id="Q5RDW1"/>
<dbReference type="FunCoup" id="Q5RDW1">
    <property type="interactions" value="907"/>
</dbReference>
<dbReference type="STRING" id="9601.ENSPPYP00000012513"/>
<dbReference type="Ensembl" id="ENSPPYT00000013005.3">
    <property type="protein sequence ID" value="ENSPPYP00000012513.2"/>
    <property type="gene ID" value="ENSPPYG00000011198.3"/>
</dbReference>
<dbReference type="GeneID" id="100171850"/>
<dbReference type="KEGG" id="pon:100171850"/>
<dbReference type="CTD" id="26164"/>
<dbReference type="eggNOG" id="KOG1489">
    <property type="taxonomic scope" value="Eukaryota"/>
</dbReference>
<dbReference type="GeneTree" id="ENSGT00940000157379"/>
<dbReference type="HOGENOM" id="CLU_011747_2_3_1"/>
<dbReference type="InParanoid" id="Q5RDW1"/>
<dbReference type="OMA" id="VVFDWEP"/>
<dbReference type="OrthoDB" id="347018at2759"/>
<dbReference type="TreeFam" id="TF314774"/>
<dbReference type="Proteomes" id="UP000001595">
    <property type="component" value="Chromosome 20"/>
</dbReference>
<dbReference type="GO" id="GO:0005743">
    <property type="term" value="C:mitochondrial inner membrane"/>
    <property type="evidence" value="ECO:0000250"/>
    <property type="project" value="UniProtKB"/>
</dbReference>
<dbReference type="GO" id="GO:0005759">
    <property type="term" value="C:mitochondrial matrix"/>
    <property type="evidence" value="ECO:0000250"/>
    <property type="project" value="UniProtKB"/>
</dbReference>
<dbReference type="GO" id="GO:0005761">
    <property type="term" value="C:mitochondrial ribosome"/>
    <property type="evidence" value="ECO:0000250"/>
    <property type="project" value="UniProtKB"/>
</dbReference>
<dbReference type="GO" id="GO:0005525">
    <property type="term" value="F:GTP binding"/>
    <property type="evidence" value="ECO:0007669"/>
    <property type="project" value="UniProtKB-KW"/>
</dbReference>
<dbReference type="GO" id="GO:0003924">
    <property type="term" value="F:GTPase activity"/>
    <property type="evidence" value="ECO:0000250"/>
    <property type="project" value="UniProtKB"/>
</dbReference>
<dbReference type="GO" id="GO:0000287">
    <property type="term" value="F:magnesium ion binding"/>
    <property type="evidence" value="ECO:0007669"/>
    <property type="project" value="InterPro"/>
</dbReference>
<dbReference type="GO" id="GO:1902775">
    <property type="term" value="P:mitochondrial large ribosomal subunit assembly"/>
    <property type="evidence" value="ECO:0007669"/>
    <property type="project" value="Ensembl"/>
</dbReference>
<dbReference type="GO" id="GO:0070129">
    <property type="term" value="P:regulation of mitochondrial translation"/>
    <property type="evidence" value="ECO:0000250"/>
    <property type="project" value="UniProtKB"/>
</dbReference>
<dbReference type="GO" id="GO:0044065">
    <property type="term" value="P:regulation of respiratory system process"/>
    <property type="evidence" value="ECO:0000250"/>
    <property type="project" value="UniProtKB"/>
</dbReference>
<dbReference type="CDD" id="cd01898">
    <property type="entry name" value="Obg"/>
    <property type="match status" value="1"/>
</dbReference>
<dbReference type="FunFam" id="2.70.210.12:FF:000001">
    <property type="entry name" value="GTPase Obg"/>
    <property type="match status" value="1"/>
</dbReference>
<dbReference type="FunFam" id="3.40.50.300:FF:001339">
    <property type="entry name" value="Mitochondrial ribosome-associated GTPase 2"/>
    <property type="match status" value="1"/>
</dbReference>
<dbReference type="Gene3D" id="2.70.210.12">
    <property type="entry name" value="GTP1/OBG domain"/>
    <property type="match status" value="1"/>
</dbReference>
<dbReference type="Gene3D" id="3.40.50.300">
    <property type="entry name" value="P-loop containing nucleotide triphosphate hydrolases"/>
    <property type="match status" value="1"/>
</dbReference>
<dbReference type="HAMAP" id="MF_01454">
    <property type="entry name" value="GTPase_Obg"/>
    <property type="match status" value="1"/>
</dbReference>
<dbReference type="InterPro" id="IPR031167">
    <property type="entry name" value="G_OBG"/>
</dbReference>
<dbReference type="InterPro" id="IPR006073">
    <property type="entry name" value="GTP-bd"/>
</dbReference>
<dbReference type="InterPro" id="IPR014100">
    <property type="entry name" value="GTP-bd_Obg/CgtA"/>
</dbReference>
<dbReference type="InterPro" id="IPR006169">
    <property type="entry name" value="GTP1_OBG_dom"/>
</dbReference>
<dbReference type="InterPro" id="IPR036726">
    <property type="entry name" value="GTP1_OBG_dom_sf"/>
</dbReference>
<dbReference type="InterPro" id="IPR045086">
    <property type="entry name" value="OBG_GTPase"/>
</dbReference>
<dbReference type="InterPro" id="IPR027417">
    <property type="entry name" value="P-loop_NTPase"/>
</dbReference>
<dbReference type="InterPro" id="IPR005225">
    <property type="entry name" value="Small_GTP-bd"/>
</dbReference>
<dbReference type="NCBIfam" id="TIGR02729">
    <property type="entry name" value="Obg_CgtA"/>
    <property type="match status" value="1"/>
</dbReference>
<dbReference type="NCBIfam" id="NF008956">
    <property type="entry name" value="PRK12299.1"/>
    <property type="match status" value="1"/>
</dbReference>
<dbReference type="NCBIfam" id="TIGR00231">
    <property type="entry name" value="small_GTP"/>
    <property type="match status" value="1"/>
</dbReference>
<dbReference type="PANTHER" id="PTHR11702">
    <property type="entry name" value="DEVELOPMENTALLY REGULATED GTP-BINDING PROTEIN-RELATED"/>
    <property type="match status" value="1"/>
</dbReference>
<dbReference type="PANTHER" id="PTHR11702:SF31">
    <property type="entry name" value="MITOCHONDRIAL RIBOSOME-ASSOCIATED GTPASE 2"/>
    <property type="match status" value="1"/>
</dbReference>
<dbReference type="Pfam" id="PF01018">
    <property type="entry name" value="GTP1_OBG"/>
    <property type="match status" value="1"/>
</dbReference>
<dbReference type="Pfam" id="PF01926">
    <property type="entry name" value="MMR_HSR1"/>
    <property type="match status" value="1"/>
</dbReference>
<dbReference type="PIRSF" id="PIRSF002401">
    <property type="entry name" value="GTP_bd_Obg/CgtA"/>
    <property type="match status" value="1"/>
</dbReference>
<dbReference type="PRINTS" id="PR00326">
    <property type="entry name" value="GTP1OBG"/>
</dbReference>
<dbReference type="SUPFAM" id="SSF82051">
    <property type="entry name" value="Obg GTP-binding protein N-terminal domain"/>
    <property type="match status" value="1"/>
</dbReference>
<dbReference type="SUPFAM" id="SSF52540">
    <property type="entry name" value="P-loop containing nucleoside triphosphate hydrolases"/>
    <property type="match status" value="1"/>
</dbReference>
<dbReference type="PROSITE" id="PS51710">
    <property type="entry name" value="G_OBG"/>
    <property type="match status" value="1"/>
</dbReference>
<dbReference type="PROSITE" id="PS51883">
    <property type="entry name" value="OBG"/>
    <property type="match status" value="1"/>
</dbReference>
<evidence type="ECO:0000250" key="1"/>
<evidence type="ECO:0000255" key="2">
    <source>
        <dbReference type="PROSITE-ProRule" id="PRU01231"/>
    </source>
</evidence>
<evidence type="ECO:0000305" key="3"/>
<name>MTG2_PONAB</name>
<organism>
    <name type="scientific">Pongo abelii</name>
    <name type="common">Sumatran orangutan</name>
    <name type="synonym">Pongo pygmaeus abelii</name>
    <dbReference type="NCBI Taxonomy" id="9601"/>
    <lineage>
        <taxon>Eukaryota</taxon>
        <taxon>Metazoa</taxon>
        <taxon>Chordata</taxon>
        <taxon>Craniata</taxon>
        <taxon>Vertebrata</taxon>
        <taxon>Euteleostomi</taxon>
        <taxon>Mammalia</taxon>
        <taxon>Eutheria</taxon>
        <taxon>Euarchontoglires</taxon>
        <taxon>Primates</taxon>
        <taxon>Haplorrhini</taxon>
        <taxon>Catarrhini</taxon>
        <taxon>Hominidae</taxon>
        <taxon>Pongo</taxon>
    </lineage>
</organism>